<dbReference type="EC" id="2.7.7.7"/>
<dbReference type="EMBL" id="L04575">
    <property type="protein sequence ID" value="AAA24435.1"/>
    <property type="molecule type" value="Genomic_DNA"/>
</dbReference>
<dbReference type="EMBL" id="L05387">
    <property type="protein sequence ID" value="AAA03076.1"/>
    <property type="molecule type" value="Unassigned_DNA"/>
</dbReference>
<dbReference type="EMBL" id="X06117">
    <property type="status" value="NOT_ANNOTATED_CDS"/>
    <property type="molecule type" value="Genomic_DNA"/>
</dbReference>
<dbReference type="EMBL" id="U14003">
    <property type="protein sequence ID" value="AAA97268.1"/>
    <property type="molecule type" value="Genomic_DNA"/>
</dbReference>
<dbReference type="EMBL" id="U00096">
    <property type="protein sequence ID" value="AAC77325.1"/>
    <property type="molecule type" value="Genomic_DNA"/>
</dbReference>
<dbReference type="EMBL" id="AP009048">
    <property type="protein sequence ID" value="BAE78360.1"/>
    <property type="molecule type" value="Genomic_DNA"/>
</dbReference>
<dbReference type="PIR" id="A48647">
    <property type="entry name" value="A48647"/>
</dbReference>
<dbReference type="RefSeq" id="NP_418789.1">
    <property type="nucleotide sequence ID" value="NC_000913.3"/>
</dbReference>
<dbReference type="RefSeq" id="WP_000204012.1">
    <property type="nucleotide sequence ID" value="NZ_LN832404.1"/>
</dbReference>
<dbReference type="PDB" id="1EM8">
    <property type="method" value="X-ray"/>
    <property type="resolution" value="2.10 A"/>
    <property type="chains" value="B/D=26-137"/>
</dbReference>
<dbReference type="PDB" id="3GLI">
    <property type="method" value="X-ray"/>
    <property type="resolution" value="3.50 A"/>
    <property type="chains" value="O/P=2-28"/>
</dbReference>
<dbReference type="PDB" id="3SXU">
    <property type="method" value="X-ray"/>
    <property type="resolution" value="1.85 A"/>
    <property type="chains" value="B=2-137"/>
</dbReference>
<dbReference type="PDB" id="8GIY">
    <property type="method" value="EM"/>
    <property type="resolution" value="3.70 A"/>
    <property type="chains" value="F=1-137"/>
</dbReference>
<dbReference type="PDB" id="8GIZ">
    <property type="method" value="EM"/>
    <property type="resolution" value="2.70 A"/>
    <property type="chains" value="F=1-137"/>
</dbReference>
<dbReference type="PDB" id="8GJ0">
    <property type="method" value="EM"/>
    <property type="resolution" value="2.90 A"/>
    <property type="chains" value="F=1-137"/>
</dbReference>
<dbReference type="PDB" id="8GJ1">
    <property type="method" value="EM"/>
    <property type="resolution" value="3.00 A"/>
    <property type="chains" value="F=1-137"/>
</dbReference>
<dbReference type="PDB" id="8GJ2">
    <property type="method" value="EM"/>
    <property type="resolution" value="2.60 A"/>
    <property type="chains" value="F=1-137"/>
</dbReference>
<dbReference type="PDB" id="8GJ3">
    <property type="method" value="EM"/>
    <property type="resolution" value="2.80 A"/>
    <property type="chains" value="F=1-137"/>
</dbReference>
<dbReference type="PDBsum" id="1EM8"/>
<dbReference type="PDBsum" id="3GLI"/>
<dbReference type="PDBsum" id="3SXU"/>
<dbReference type="PDBsum" id="8GIY"/>
<dbReference type="PDBsum" id="8GIZ"/>
<dbReference type="PDBsum" id="8GJ0"/>
<dbReference type="PDBsum" id="8GJ1"/>
<dbReference type="PDBsum" id="8GJ2"/>
<dbReference type="PDBsum" id="8GJ3"/>
<dbReference type="EMDB" id="EMD-40079"/>
<dbReference type="EMDB" id="EMD-40080"/>
<dbReference type="EMDB" id="EMD-40081"/>
<dbReference type="EMDB" id="EMD-40082"/>
<dbReference type="EMDB" id="EMD-40083"/>
<dbReference type="EMDB" id="EMD-40084"/>
<dbReference type="SMR" id="P28632"/>
<dbReference type="BioGRID" id="4262785">
    <property type="interactions" value="120"/>
</dbReference>
<dbReference type="BioGRID" id="853167">
    <property type="interactions" value="4"/>
</dbReference>
<dbReference type="ComplexPortal" id="CPX-1926">
    <property type="entry name" value="DNA polymerase III clamp loader complex"/>
</dbReference>
<dbReference type="DIP" id="DIP-9934N"/>
<dbReference type="FunCoup" id="P28632">
    <property type="interactions" value="151"/>
</dbReference>
<dbReference type="IntAct" id="P28632">
    <property type="interactions" value="23"/>
</dbReference>
<dbReference type="MINT" id="P28632"/>
<dbReference type="STRING" id="511145.b4372"/>
<dbReference type="jPOST" id="P28632"/>
<dbReference type="PaxDb" id="511145-b4372"/>
<dbReference type="EnsemblBacteria" id="AAC77325">
    <property type="protein sequence ID" value="AAC77325"/>
    <property type="gene ID" value="b4372"/>
</dbReference>
<dbReference type="GeneID" id="948890"/>
<dbReference type="KEGG" id="ecj:JW4334"/>
<dbReference type="KEGG" id="eco:b4372"/>
<dbReference type="KEGG" id="ecoc:C3026_23620"/>
<dbReference type="PATRIC" id="fig|1411691.4.peg.2316"/>
<dbReference type="EchoBASE" id="EB1386"/>
<dbReference type="eggNOG" id="COG3050">
    <property type="taxonomic scope" value="Bacteria"/>
</dbReference>
<dbReference type="HOGENOM" id="CLU_132082_0_0_6"/>
<dbReference type="InParanoid" id="P28632"/>
<dbReference type="OMA" id="QICAHEH"/>
<dbReference type="OrthoDB" id="5682636at2"/>
<dbReference type="PhylomeDB" id="P28632"/>
<dbReference type="BioCyc" id="EcoCyc:EG11414-MONOMER"/>
<dbReference type="BioCyc" id="MetaCyc:EG11414-MONOMER"/>
<dbReference type="BRENDA" id="3.6.4.B8">
    <property type="organism ID" value="2026"/>
</dbReference>
<dbReference type="EvolutionaryTrace" id="P28632"/>
<dbReference type="PRO" id="PR:P28632"/>
<dbReference type="Proteomes" id="UP000000625">
    <property type="component" value="Chromosome"/>
</dbReference>
<dbReference type="GO" id="GO:0009360">
    <property type="term" value="C:DNA polymerase III complex"/>
    <property type="evidence" value="ECO:0000303"/>
    <property type="project" value="ComplexPortal"/>
</dbReference>
<dbReference type="GO" id="GO:0043846">
    <property type="term" value="C:DNA polymerase III, clamp loader complex"/>
    <property type="evidence" value="ECO:0000353"/>
    <property type="project" value="ComplexPortal"/>
</dbReference>
<dbReference type="GO" id="GO:0030894">
    <property type="term" value="C:replisome"/>
    <property type="evidence" value="ECO:0000303"/>
    <property type="project" value="ComplexPortal"/>
</dbReference>
<dbReference type="GO" id="GO:0008408">
    <property type="term" value="F:3'-5' exonuclease activity"/>
    <property type="evidence" value="ECO:0007669"/>
    <property type="project" value="InterPro"/>
</dbReference>
<dbReference type="GO" id="GO:0003887">
    <property type="term" value="F:DNA-directed DNA polymerase activity"/>
    <property type="evidence" value="ECO:0000314"/>
    <property type="project" value="EcoCyc"/>
</dbReference>
<dbReference type="GO" id="GO:0006260">
    <property type="term" value="P:DNA replication"/>
    <property type="evidence" value="ECO:0000303"/>
    <property type="project" value="ComplexPortal"/>
</dbReference>
<dbReference type="GO" id="GO:0006261">
    <property type="term" value="P:DNA-templated DNA replication"/>
    <property type="evidence" value="ECO:0000303"/>
    <property type="project" value="ComplexPortal"/>
</dbReference>
<dbReference type="GO" id="GO:0009314">
    <property type="term" value="P:response to radiation"/>
    <property type="evidence" value="ECO:0000315"/>
    <property type="project" value="EcoCyc"/>
</dbReference>
<dbReference type="Gene3D" id="3.40.50.10220">
    <property type="entry name" value="DNA polymerase III, psi subunit"/>
    <property type="match status" value="1"/>
</dbReference>
<dbReference type="InterPro" id="IPR004615">
    <property type="entry name" value="DNA_pol_III_psi"/>
</dbReference>
<dbReference type="InterPro" id="IPR036654">
    <property type="entry name" value="DNA_pol_III_psi_sf"/>
</dbReference>
<dbReference type="InterPro" id="IPR018382">
    <property type="entry name" value="DNA_pol_III_psi_subgr"/>
</dbReference>
<dbReference type="NCBIfam" id="TIGR00664">
    <property type="entry name" value="DNA_III_psi"/>
    <property type="match status" value="1"/>
</dbReference>
<dbReference type="NCBIfam" id="NF005336">
    <property type="entry name" value="PRK06856.1-2"/>
    <property type="match status" value="1"/>
</dbReference>
<dbReference type="NCBIfam" id="NF005339">
    <property type="entry name" value="PRK06856.1-5"/>
    <property type="match status" value="1"/>
</dbReference>
<dbReference type="Pfam" id="PF03603">
    <property type="entry name" value="DNA_III_psi"/>
    <property type="match status" value="1"/>
</dbReference>
<dbReference type="PIRSF" id="PIRSF029225">
    <property type="entry name" value="DNA_pol_III_psi"/>
    <property type="match status" value="1"/>
</dbReference>
<dbReference type="SUPFAM" id="SSF102220">
    <property type="entry name" value="DNA polymerase III psi subunit"/>
    <property type="match status" value="1"/>
</dbReference>
<reference key="1">
    <citation type="journal article" date="1993" name="J. Biol. Chem.">
        <title>DNA polymerase III accessory proteins. III. holC and holD encoding chi and psi.</title>
        <authorList>
            <person name="Xiao H."/>
            <person name="Crombie R."/>
            <person name="Dong Z."/>
            <person name="Onrust R."/>
            <person name="O'Donnell M."/>
        </authorList>
    </citation>
    <scope>NUCLEOTIDE SEQUENCE [GENOMIC DNA]</scope>
    <source>
        <strain>K12</strain>
    </source>
</reference>
<reference key="2">
    <citation type="journal article" date="1993" name="J. Bacteriol.">
        <title>Identification, isolation, and overexpression of the gene encoding the psi subunit of DNA polymerase III holoenzyme.</title>
        <authorList>
            <person name="Carter J.R."/>
            <person name="Franden M.A."/>
            <person name="Aebersold R.H."/>
            <person name="McHenry C.S."/>
        </authorList>
    </citation>
    <scope>NUCLEOTIDE SEQUENCE [GENOMIC DNA]</scope>
    <source>
        <strain>K12 / MG1655 / ATCC 47076</strain>
    </source>
</reference>
<reference key="3">
    <citation type="journal article" date="1987" name="Mol. Gen. Genet.">
        <title>Cloning and nucleotide sequencing of the genes rimI and rimJ which encode enzymes acetylating ribosomal proteins S18 and S5 of Escherichia coli K12.</title>
        <authorList>
            <person name="Yoshikawa A."/>
            <person name="Isono S."/>
            <person name="Sheback A."/>
            <person name="Isono K."/>
        </authorList>
    </citation>
    <scope>NUCLEOTIDE SEQUENCE [GENOMIC DNA]</scope>
    <source>
        <strain>K12</strain>
    </source>
</reference>
<reference key="4">
    <citation type="journal article" date="1995" name="Nucleic Acids Res.">
        <title>Analysis of the Escherichia coli genome VI: DNA sequence of the region from 92.8 through 100 minutes.</title>
        <authorList>
            <person name="Burland V.D."/>
            <person name="Plunkett G. III"/>
            <person name="Sofia H.J."/>
            <person name="Daniels D.L."/>
            <person name="Blattner F.R."/>
        </authorList>
    </citation>
    <scope>NUCLEOTIDE SEQUENCE [LARGE SCALE GENOMIC DNA]</scope>
    <source>
        <strain>K12 / MG1655 / ATCC 47076</strain>
    </source>
</reference>
<reference key="5">
    <citation type="journal article" date="1997" name="Science">
        <title>The complete genome sequence of Escherichia coli K-12.</title>
        <authorList>
            <person name="Blattner F.R."/>
            <person name="Plunkett G. III"/>
            <person name="Bloch C.A."/>
            <person name="Perna N.T."/>
            <person name="Burland V."/>
            <person name="Riley M."/>
            <person name="Collado-Vides J."/>
            <person name="Glasner J.D."/>
            <person name="Rode C.K."/>
            <person name="Mayhew G.F."/>
            <person name="Gregor J."/>
            <person name="Davis N.W."/>
            <person name="Kirkpatrick H.A."/>
            <person name="Goeden M.A."/>
            <person name="Rose D.J."/>
            <person name="Mau B."/>
            <person name="Shao Y."/>
        </authorList>
    </citation>
    <scope>NUCLEOTIDE SEQUENCE [LARGE SCALE GENOMIC DNA]</scope>
    <source>
        <strain>K12 / MG1655 / ATCC 47076</strain>
    </source>
</reference>
<reference key="6">
    <citation type="journal article" date="2006" name="Mol. Syst. Biol.">
        <title>Highly accurate genome sequences of Escherichia coli K-12 strains MG1655 and W3110.</title>
        <authorList>
            <person name="Hayashi K."/>
            <person name="Morooka N."/>
            <person name="Yamamoto Y."/>
            <person name="Fujita K."/>
            <person name="Isono K."/>
            <person name="Choi S."/>
            <person name="Ohtsubo E."/>
            <person name="Baba T."/>
            <person name="Wanner B.L."/>
            <person name="Mori H."/>
            <person name="Horiuchi T."/>
        </authorList>
    </citation>
    <scope>NUCLEOTIDE SEQUENCE [LARGE SCALE GENOMIC DNA]</scope>
    <source>
        <strain>K12 / W3110 / ATCC 27325 / DSM 5911</strain>
    </source>
</reference>
<reference key="7">
    <citation type="journal article" date="1993" name="J. Biol. Chem.">
        <title>DNA polymerase III accessory proteins. IV. Characterization of chi and psi.</title>
        <authorList>
            <person name="Xiao H."/>
            <person name="Dong Z."/>
            <person name="O'Donnell M."/>
        </authorList>
    </citation>
    <scope>CHARACTERIZATION</scope>
</reference>
<reference key="8">
    <citation type="journal article" date="1991" name="J. Biol. Chem.">
        <title>Mechanism of the sliding beta-clamp of DNA polymerase III holoenzyme.</title>
        <authorList>
            <person name="Stukenberg P.T."/>
            <person name="Studwell-Vaughan P.S."/>
            <person name="O'Donnell M."/>
        </authorList>
    </citation>
    <scope>FUNCTION</scope>
    <scope>SUBUNIT</scope>
</reference>
<reference key="9">
    <citation type="journal article" date="2010" name="Science">
        <title>Stoichiometry and architecture of active DNA replication machinery in Escherichia coli.</title>
        <authorList>
            <person name="Reyes-Lamothe R."/>
            <person name="Sherratt D.J."/>
            <person name="Leake M.C."/>
        </authorList>
    </citation>
    <scope>REPLISOME COMPLEX</scope>
    <scope>SUBUNIT</scope>
</reference>
<reference key="10">
    <citation type="journal article" date="2011" name="Nat. Struct. Mol. Biol.">
        <title>Single-molecule studies reveal the function of a third polymerase in the replisome.</title>
        <authorList>
            <person name="Georgescu R.E."/>
            <person name="Kurth I."/>
            <person name="O'Donnell M.E."/>
        </authorList>
    </citation>
    <scope>REPLISOME COMPLEX</scope>
    <scope>SUBUNIT</scope>
</reference>
<reference key="11">
    <citation type="journal article" date="2015" name="PLoS Genet.">
        <title>Connecting replication and repair: YoaA, a helicase-related protein, promotes azidothymidine tolerance through association with Chi, an accessory clamp loader protein.</title>
        <authorList>
            <person name="Brown L.T."/>
            <person name="Sutera V.A. Jr."/>
            <person name="Zhou S."/>
            <person name="Weitzel C.S."/>
            <person name="Cheng Y."/>
            <person name="Lovett S.T."/>
        </authorList>
    </citation>
    <scope>INTERACTION WITH HOLC (CHI)</scope>
    <source>
        <strain>K12 / MG1655 / ATCC 47076</strain>
    </source>
</reference>
<reference key="12">
    <citation type="journal article" date="2021" name="DNA Repair">
        <title>Alternative complexes formed by the Escherichia coli clamp loader accessory protein HolC (x) with replication protein HolD (psi) and repair protein YoaA.</title>
        <authorList>
            <person name="Sutera V.A."/>
            <person name="Weeks S.J."/>
            <person name="Dudenhausen E.E."/>
            <person name="Baggett H.B.R."/>
            <person name="Shaw M.C."/>
            <person name="Brand K.A."/>
            <person name="Glass D.J."/>
            <person name="Bloom L.B."/>
            <person name="Lovett S.T."/>
        </authorList>
    </citation>
    <scope>INTERACTION WITH HOLC (CHI)</scope>
</reference>
<reference key="13">
    <citation type="journal article" date="1992" name="Bioessays">
        <title>Accessory protein function in the DNA polymerase III holoenzyme from E. coli.</title>
        <authorList>
            <person name="O'Donnell M."/>
        </authorList>
    </citation>
    <scope>REVIEW</scope>
</reference>
<reference key="14">
    <citation type="journal article" date="2004" name="Eur. J. Biochem.">
        <title>Crystal structure of the chi:psi sub-assembly of the Escherichia coli DNA polymerase clamp-loader complex.</title>
        <authorList>
            <person name="Gulbis J.M."/>
            <person name="Kazmirski S.L."/>
            <person name="Finkelstein J."/>
            <person name="Kelman Z."/>
            <person name="O'Donnell M."/>
            <person name="Kuriyan J."/>
        </authorList>
    </citation>
    <scope>X-RAY CRYSTALLOGRAPHY (2.1 ANGSTROMS) OF 26-137 IN COMPLEX WITH HOLC (CHI)</scope>
</reference>
<gene>
    <name evidence="6" type="primary">holD</name>
    <name type="ordered locus">b4372</name>
    <name type="ordered locus">JW4334</name>
</gene>
<protein>
    <recommendedName>
        <fullName evidence="6">DNA polymerase III subunit psi</fullName>
        <ecNumber>2.7.7.7</ecNumber>
    </recommendedName>
    <alternativeName>
        <fullName evidence="7">Accessory clamp loader complex subunit psi</fullName>
    </alternativeName>
    <alternativeName>
        <fullName evidence="7">Replication clamp loader subunit HolD</fullName>
    </alternativeName>
</protein>
<evidence type="ECO:0000269" key="1">
    <source>
    </source>
</evidence>
<evidence type="ECO:0000269" key="2">
    <source>
    </source>
</evidence>
<evidence type="ECO:0000269" key="3">
    <source>
    </source>
</evidence>
<evidence type="ECO:0000269" key="4">
    <source>
    </source>
</evidence>
<evidence type="ECO:0000269" key="5">
    <source>
    </source>
</evidence>
<evidence type="ECO:0000303" key="6">
    <source>
    </source>
</evidence>
<evidence type="ECO:0000305" key="7"/>
<evidence type="ECO:0007829" key="8">
    <source>
        <dbReference type="PDB" id="1EM8"/>
    </source>
</evidence>
<evidence type="ECO:0007829" key="9">
    <source>
        <dbReference type="PDB" id="3SXU"/>
    </source>
</evidence>
<evidence type="ECO:0007829" key="10">
    <source>
        <dbReference type="PDB" id="8GJ2"/>
    </source>
</evidence>
<name>HOLD_ECOLI</name>
<keyword id="KW-0002">3D-structure</keyword>
<keyword id="KW-0235">DNA replication</keyword>
<keyword id="KW-0239">DNA-directed DNA polymerase</keyword>
<keyword id="KW-0548">Nucleotidyltransferase</keyword>
<keyword id="KW-1185">Reference proteome</keyword>
<keyword id="KW-0808">Transferase</keyword>
<accession>P28632</accession>
<accession>Q2M5U6</accession>
<comment type="function">
    <text evidence="1">Part of the beta sliding clamp loading complex, which hydrolyzes ATP to load the beta clamp onto primed DNA to form the DNA replication pre-initiation complex (PubMed:2040637). DNA polymerase III is a complex, multichain enzyme responsible for most of the replicative synthesis in bacteria. This DNA polymerase also exhibits 3' to 5' exonuclease activity.</text>
</comment>
<comment type="catalytic activity">
    <reaction>
        <text>DNA(n) + a 2'-deoxyribonucleoside 5'-triphosphate = DNA(n+1) + diphosphate</text>
        <dbReference type="Rhea" id="RHEA:22508"/>
        <dbReference type="Rhea" id="RHEA-COMP:17339"/>
        <dbReference type="Rhea" id="RHEA-COMP:17340"/>
        <dbReference type="ChEBI" id="CHEBI:33019"/>
        <dbReference type="ChEBI" id="CHEBI:61560"/>
        <dbReference type="ChEBI" id="CHEBI:173112"/>
        <dbReference type="EC" id="2.7.7.7"/>
    </reaction>
</comment>
<comment type="subunit">
    <text evidence="1 2 3 4 5">The DNA polymerase III holoenzyme complex contains at least 10 different subunits organized into 3 functionally essential subassemblies: the Pol III core, the beta sliding clamp processivity factor and the clamp-loading complex. The Pol III core (subunits alpha, epsilon and theta) contains the polymerase and the 3'-5' exonuclease proofreading activities (PubMed:2040637). The polymerase is tethered to the template via the dimeric beta sliding clamp processivity factor. The clamp-loading complex (also called gamma complex) assembles the beta sliding clamp onto the primed template and plays a central role in the organization and communication at the replication fork. The clamp-loading complex contains delta, delta', psi and chi, and 3 copies of either or both of two different DnaX proteins, gamma and tau. The DNA replisome complex has a single clamp loader (3 tau and 1 each of delta, delta', psi and chi subunits) which binds 3 Pol III cores (1 core on the leading strand and 2 on the lagging strand) each with a beta sliding clamp dimer. Additional proteins in the replisome are other copies of gamma, psi (this protein) and chi (holC), SSB, DNA helicase and RNA primase (PubMed:20413500, PubMed:22157955). The clamp loader hydrolyzes ATP to assemble the beta processivity factor onto the primed template (PubMed:2040637) and plays a central role in the organization and communication at the replication fork. Interacts directly with the chi subunit (holC) (PubMed:14717711, PubMed:26544712, PubMed:33582602).</text>
</comment>
<comment type="interaction">
    <interactant intactId="EBI-549176">
        <id>P28632</id>
    </interactant>
    <interactant intactId="EBI-549140">
        <id>P06710</id>
        <label>dnaX</label>
    </interactant>
    <organismsDiffer>false</organismsDiffer>
    <experiments>26</experiments>
</comment>
<comment type="interaction">
    <interactant intactId="EBI-549176">
        <id>P28632</id>
    </interactant>
    <interactant intactId="EBI-2604194">
        <id>P06710-2</id>
        <label>dnaX</label>
    </interactant>
    <organismsDiffer>false</organismsDiffer>
    <experiments>2</experiments>
</comment>
<comment type="interaction">
    <interactant intactId="EBI-549176">
        <id>P28632</id>
    </interactant>
    <interactant intactId="EBI-549169">
        <id>P28905</id>
        <label>holC</label>
    </interactant>
    <organismsDiffer>false</organismsDiffer>
    <experiments>25</experiments>
</comment>
<comment type="interaction">
    <interactant intactId="EBI-549176">
        <id>P28632</id>
    </interactant>
    <interactant intactId="EBI-552080">
        <id>P14294</id>
        <label>topB</label>
    </interactant>
    <organismsDiffer>false</organismsDiffer>
    <experiments>3</experiments>
</comment>
<comment type="interaction">
    <interactant intactId="EBI-549176">
        <id>P28632</id>
    </interactant>
    <interactant intactId="EBI-544837">
        <id>P76092</id>
        <label>ynbC</label>
    </interactant>
    <organismsDiffer>false</organismsDiffer>
    <experiments>3</experiments>
</comment>
<comment type="similarity">
    <text evidence="7">Belongs to the DNA polymerase III psi/HolD chain family.</text>
</comment>
<feature type="chain" id="PRO_0000105520" description="DNA polymerase III subunit psi">
    <location>
        <begin position="1"/>
        <end position="137"/>
    </location>
</feature>
<feature type="helix" evidence="10">
    <location>
        <begin position="4"/>
        <end position="12"/>
    </location>
</feature>
<feature type="strand" evidence="10">
    <location>
        <begin position="17"/>
        <end position="20"/>
    </location>
</feature>
<feature type="helix" evidence="10">
    <location>
        <begin position="22"/>
        <end position="24"/>
    </location>
</feature>
<feature type="strand" evidence="9">
    <location>
        <begin position="39"/>
        <end position="42"/>
    </location>
</feature>
<feature type="helix" evidence="9">
    <location>
        <begin position="52"/>
        <end position="61"/>
    </location>
</feature>
<feature type="helix" evidence="9">
    <location>
        <begin position="65"/>
        <end position="67"/>
    </location>
</feature>
<feature type="strand" evidence="9">
    <location>
        <begin position="68"/>
        <end position="71"/>
    </location>
</feature>
<feature type="helix" evidence="9">
    <location>
        <begin position="73"/>
        <end position="76"/>
    </location>
</feature>
<feature type="strand" evidence="9">
    <location>
        <begin position="87"/>
        <end position="91"/>
    </location>
</feature>
<feature type="strand" evidence="8">
    <location>
        <begin position="97"/>
        <end position="100"/>
    </location>
</feature>
<feature type="strand" evidence="9">
    <location>
        <begin position="102"/>
        <end position="105"/>
    </location>
</feature>
<feature type="helix" evidence="9">
    <location>
        <begin position="108"/>
        <end position="113"/>
    </location>
</feature>
<feature type="helix" evidence="9">
    <location>
        <begin position="115"/>
        <end position="127"/>
    </location>
</feature>
<feature type="helix" evidence="9">
    <location>
        <begin position="129"/>
        <end position="132"/>
    </location>
</feature>
<organism>
    <name type="scientific">Escherichia coli (strain K12)</name>
    <dbReference type="NCBI Taxonomy" id="83333"/>
    <lineage>
        <taxon>Bacteria</taxon>
        <taxon>Pseudomonadati</taxon>
        <taxon>Pseudomonadota</taxon>
        <taxon>Gammaproteobacteria</taxon>
        <taxon>Enterobacterales</taxon>
        <taxon>Enterobacteriaceae</taxon>
        <taxon>Escherichia</taxon>
    </lineage>
</organism>
<sequence>MTSRRDWQLQQLGITQWSLRRPGALQGEIAIAIPAHVRLVMVANDLPALTDPLVSDVLRALTVSPDQVLQLTPEKIAMLPQGSHCNSWRLGTDEPLSLEGAQVASPALTDLRANPTARAALWQQICTYEHDFFPRND</sequence>
<proteinExistence type="evidence at protein level"/>